<protein>
    <recommendedName>
        <fullName evidence="6">Transcription factor PHYTOCHROME INTERACTING FACTOR-LIKE 15</fullName>
        <shortName evidence="6">OsPIL15</shortName>
        <shortName evidence="7">PIF-like protein 15</shortName>
    </recommendedName>
    <alternativeName>
        <fullName evidence="5">Basic helix-loop-helix protein 105</fullName>
        <shortName evidence="5">OsbHLH105</shortName>
    </alternativeName>
</protein>
<proteinExistence type="evidence at protein level"/>
<sequence length="637" mass="66589">MSDGNDFAELLWENGQAVVHGRKKHPQPAFPPFGFFGGTGGGGGGSSSRAQERQPGGIDAFAKVGGGFGALGMAPAVHDFASGFGATTQDNGDDDTVPWIHYPIIDDEDAAAPAALAAADYGSDFFSELQAAAAAAAAAAPPTDLASLPASNHNGATNNRNAPVATTTTREPSKESHGGLSVPTTRAEPQPQPQLAAAKLPRSSGSGGGEGVMNFSLFSRPAVLARATLESAQRTQGTDNKASNVTASNRVESTVVQTASGPRSAPAFADQRAAAWPPQPKEMPFASTAAAPMAPAVNLHHEMGRDRAGRTMPVHKTEARKAPEATVATSSVCSGNGAGSDELWRQQKRKCQAQAECSASQDDDLDDEPGVLRKSGTRSTKRSRTAEVHNLSERRRRDRINEKMRALQELIPNCNKIDKASMLDEAIEYLKTLQLQVQMMSMGTGLCIPPMLLPTAMQHLQIPPMAHFPHLGMGLGYGMGVFDMSNTGALQMPPMPGAHFPCPMIPGASPQGLGIPGTSTMPMFGVPGQTIPSSASSVPPFASLAGLPVRPSGVPQVSGAMANMVQDQQQGIANQQQQCLNKEAIQGANPGDSQMQIIMQGDNENFRIPSSAQTKSSQFSDGTGKGTNARERDGAET</sequence>
<comment type="function">
    <text evidence="3">Transcription factor that may act as negative regulator of phyB-dependent light signal transduction.</text>
</comment>
<comment type="subunit">
    <text evidence="4">Interacts with LF and PRR1.</text>
</comment>
<comment type="subcellular location">
    <subcellularLocation>
        <location evidence="1 4">Nucleus</location>
    </subcellularLocation>
</comment>
<comment type="induction">
    <text evidence="3">Down-regulated by light in dark-grown etiolated seedlings.</text>
</comment>
<comment type="similarity">
    <text evidence="7">Belongs to the bHLH protein family.</text>
</comment>
<comment type="sequence caution" evidence="7">
    <conflict type="erroneous gene model prediction">
        <sequence resource="EMBL-CDS" id="BAD81566"/>
    </conflict>
</comment>
<comment type="sequence caution" evidence="7">
    <conflict type="erroneous gene model prediction">
        <sequence resource="EMBL-CDS" id="BAS71627"/>
    </conflict>
</comment>
<evidence type="ECO:0000255" key="1">
    <source>
        <dbReference type="PROSITE-ProRule" id="PRU00981"/>
    </source>
</evidence>
<evidence type="ECO:0000256" key="2">
    <source>
        <dbReference type="SAM" id="MobiDB-lite"/>
    </source>
</evidence>
<evidence type="ECO:0000269" key="3">
    <source>
    </source>
</evidence>
<evidence type="ECO:0000269" key="4">
    <source>
    </source>
</evidence>
<evidence type="ECO:0000303" key="5">
    <source>
    </source>
</evidence>
<evidence type="ECO:0000303" key="6">
    <source>
    </source>
</evidence>
<evidence type="ECO:0000305" key="7"/>
<evidence type="ECO:0000312" key="8">
    <source>
        <dbReference type="EMBL" id="BAD81566.1"/>
    </source>
</evidence>
<evidence type="ECO:0000312" key="9">
    <source>
        <dbReference type="EMBL" id="BAF04689.2"/>
    </source>
</evidence>
<dbReference type="EMBL" id="AP003020">
    <property type="protein sequence ID" value="BAD81566.1"/>
    <property type="status" value="ALT_SEQ"/>
    <property type="molecule type" value="Genomic_DNA"/>
</dbReference>
<dbReference type="EMBL" id="AP008207">
    <property type="protein sequence ID" value="BAF04689.2"/>
    <property type="molecule type" value="Genomic_DNA"/>
</dbReference>
<dbReference type="EMBL" id="AP014957">
    <property type="protein sequence ID" value="BAS71627.1"/>
    <property type="status" value="ALT_SEQ"/>
    <property type="molecule type" value="Genomic_DNA"/>
</dbReference>
<dbReference type="EMBL" id="AK102252">
    <property type="protein sequence ID" value="BAG95464.1"/>
    <property type="molecule type" value="mRNA"/>
</dbReference>
<dbReference type="SMR" id="Q0JNI9"/>
<dbReference type="FunCoup" id="Q0JNI9">
    <property type="interactions" value="2463"/>
</dbReference>
<dbReference type="STRING" id="39947.Q0JNI9"/>
<dbReference type="PaxDb" id="39947-Q0JNI9"/>
<dbReference type="EnsemblPlants" id="Os01t0286100-01">
    <property type="protein sequence ID" value="Os01t0286100-01"/>
    <property type="gene ID" value="Os01g0286100"/>
</dbReference>
<dbReference type="Gramene" id="Os01t0286100-01">
    <property type="protein sequence ID" value="Os01t0286100-01"/>
    <property type="gene ID" value="Os01g0286100"/>
</dbReference>
<dbReference type="KEGG" id="dosa:Os01g0286100"/>
<dbReference type="KEGG" id="osa:4327916"/>
<dbReference type="eggNOG" id="ENOG502QV9I">
    <property type="taxonomic scope" value="Eukaryota"/>
</dbReference>
<dbReference type="HOGENOM" id="CLU_014289_0_0_1"/>
<dbReference type="InParanoid" id="Q0JNI9"/>
<dbReference type="OrthoDB" id="690068at2759"/>
<dbReference type="PlantReactome" id="R-OSA-8933811">
    <property type="pathway name" value="Circadian rhythm"/>
</dbReference>
<dbReference type="Proteomes" id="UP000000763">
    <property type="component" value="Chromosome 1"/>
</dbReference>
<dbReference type="Proteomes" id="UP000059680">
    <property type="component" value="Chromosome 1"/>
</dbReference>
<dbReference type="GO" id="GO:0005634">
    <property type="term" value="C:nucleus"/>
    <property type="evidence" value="ECO:0000314"/>
    <property type="project" value="UniProtKB"/>
</dbReference>
<dbReference type="GO" id="GO:0003677">
    <property type="term" value="F:DNA binding"/>
    <property type="evidence" value="ECO:0007669"/>
    <property type="project" value="UniProtKB-KW"/>
</dbReference>
<dbReference type="GO" id="GO:0003700">
    <property type="term" value="F:DNA-binding transcription factor activity"/>
    <property type="evidence" value="ECO:0007669"/>
    <property type="project" value="InterPro"/>
</dbReference>
<dbReference type="GO" id="GO:0046983">
    <property type="term" value="F:protein dimerization activity"/>
    <property type="evidence" value="ECO:0007669"/>
    <property type="project" value="InterPro"/>
</dbReference>
<dbReference type="GO" id="GO:0090229">
    <property type="term" value="P:negative regulation of red or far-red light signaling pathway"/>
    <property type="evidence" value="ECO:0000314"/>
    <property type="project" value="UniProtKB"/>
</dbReference>
<dbReference type="GO" id="GO:0006355">
    <property type="term" value="P:regulation of DNA-templated transcription"/>
    <property type="evidence" value="ECO:0000314"/>
    <property type="project" value="UniProtKB"/>
</dbReference>
<dbReference type="CDD" id="cd11445">
    <property type="entry name" value="bHLH_AtPIF_like"/>
    <property type="match status" value="1"/>
</dbReference>
<dbReference type="FunFam" id="4.10.280.10:FF:000004">
    <property type="entry name" value="Basic helix-loop-helix transcription factor"/>
    <property type="match status" value="1"/>
</dbReference>
<dbReference type="Gene3D" id="4.10.280.10">
    <property type="entry name" value="Helix-loop-helix DNA-binding domain"/>
    <property type="match status" value="1"/>
</dbReference>
<dbReference type="InterPro" id="IPR011598">
    <property type="entry name" value="bHLH_dom"/>
</dbReference>
<dbReference type="InterPro" id="IPR036638">
    <property type="entry name" value="HLH_DNA-bd_sf"/>
</dbReference>
<dbReference type="InterPro" id="IPR047265">
    <property type="entry name" value="PIF1-like_bHLH"/>
</dbReference>
<dbReference type="InterPro" id="IPR044273">
    <property type="entry name" value="PIF3-like"/>
</dbReference>
<dbReference type="PANTHER" id="PTHR46807">
    <property type="entry name" value="TRANSCRIPTION FACTOR PIF3"/>
    <property type="match status" value="1"/>
</dbReference>
<dbReference type="PANTHER" id="PTHR46807:SF1">
    <property type="entry name" value="TRANSCRIPTION FACTOR PIF3"/>
    <property type="match status" value="1"/>
</dbReference>
<dbReference type="Pfam" id="PF00010">
    <property type="entry name" value="HLH"/>
    <property type="match status" value="1"/>
</dbReference>
<dbReference type="SMART" id="SM00353">
    <property type="entry name" value="HLH"/>
    <property type="match status" value="1"/>
</dbReference>
<dbReference type="SUPFAM" id="SSF47459">
    <property type="entry name" value="HLH, helix-loop-helix DNA-binding domain"/>
    <property type="match status" value="1"/>
</dbReference>
<dbReference type="PROSITE" id="PS50888">
    <property type="entry name" value="BHLH"/>
    <property type="match status" value="1"/>
</dbReference>
<name>PIL15_ORYSJ</name>
<gene>
    <name evidence="6" type="primary">PIL15</name>
    <name evidence="5" type="synonym">BHLH105</name>
    <name evidence="9" type="ordered locus">Os01g0286100</name>
    <name evidence="7" type="ordered locus">LOC_Os01g18290</name>
    <name evidence="8" type="ORF">P0498A12.33</name>
</gene>
<reference key="1">
    <citation type="journal article" date="2002" name="Nature">
        <title>The genome sequence and structure of rice chromosome 1.</title>
        <authorList>
            <person name="Sasaki T."/>
            <person name="Matsumoto T."/>
            <person name="Yamamoto K."/>
            <person name="Sakata K."/>
            <person name="Baba T."/>
            <person name="Katayose Y."/>
            <person name="Wu J."/>
            <person name="Niimura Y."/>
            <person name="Cheng Z."/>
            <person name="Nagamura Y."/>
            <person name="Antonio B.A."/>
            <person name="Kanamori H."/>
            <person name="Hosokawa S."/>
            <person name="Masukawa M."/>
            <person name="Arikawa K."/>
            <person name="Chiden Y."/>
            <person name="Hayashi M."/>
            <person name="Okamoto M."/>
            <person name="Ando T."/>
            <person name="Aoki H."/>
            <person name="Arita K."/>
            <person name="Hamada M."/>
            <person name="Harada C."/>
            <person name="Hijishita S."/>
            <person name="Honda M."/>
            <person name="Ichikawa Y."/>
            <person name="Idonuma A."/>
            <person name="Iijima M."/>
            <person name="Ikeda M."/>
            <person name="Ikeno M."/>
            <person name="Ito S."/>
            <person name="Ito T."/>
            <person name="Ito Y."/>
            <person name="Ito Y."/>
            <person name="Iwabuchi A."/>
            <person name="Kamiya K."/>
            <person name="Karasawa W."/>
            <person name="Katagiri S."/>
            <person name="Kikuta A."/>
            <person name="Kobayashi N."/>
            <person name="Kono I."/>
            <person name="Machita K."/>
            <person name="Maehara T."/>
            <person name="Mizuno H."/>
            <person name="Mizubayashi T."/>
            <person name="Mukai Y."/>
            <person name="Nagasaki H."/>
            <person name="Nakashima M."/>
            <person name="Nakama Y."/>
            <person name="Nakamichi Y."/>
            <person name="Nakamura M."/>
            <person name="Namiki N."/>
            <person name="Negishi M."/>
            <person name="Ohta I."/>
            <person name="Ono N."/>
            <person name="Saji S."/>
            <person name="Sakai K."/>
            <person name="Shibata M."/>
            <person name="Shimokawa T."/>
            <person name="Shomura A."/>
            <person name="Song J."/>
            <person name="Takazaki Y."/>
            <person name="Terasawa K."/>
            <person name="Tsuji K."/>
            <person name="Waki K."/>
            <person name="Yamagata H."/>
            <person name="Yamane H."/>
            <person name="Yoshiki S."/>
            <person name="Yoshihara R."/>
            <person name="Yukawa K."/>
            <person name="Zhong H."/>
            <person name="Iwama H."/>
            <person name="Endo T."/>
            <person name="Ito H."/>
            <person name="Hahn J.H."/>
            <person name="Kim H.-I."/>
            <person name="Eun M.-Y."/>
            <person name="Yano M."/>
            <person name="Jiang J."/>
            <person name="Gojobori T."/>
        </authorList>
    </citation>
    <scope>NUCLEOTIDE SEQUENCE [LARGE SCALE GENOMIC DNA]</scope>
    <source>
        <strain>cv. Nipponbare</strain>
    </source>
</reference>
<reference key="2">
    <citation type="journal article" date="2005" name="Nature">
        <title>The map-based sequence of the rice genome.</title>
        <authorList>
            <consortium name="International rice genome sequencing project (IRGSP)"/>
        </authorList>
    </citation>
    <scope>NUCLEOTIDE SEQUENCE [LARGE SCALE GENOMIC DNA]</scope>
    <source>
        <strain>cv. Nipponbare</strain>
    </source>
</reference>
<reference key="3">
    <citation type="journal article" date="2008" name="Nucleic Acids Res.">
        <title>The rice annotation project database (RAP-DB): 2008 update.</title>
        <authorList>
            <consortium name="The rice annotation project (RAP)"/>
        </authorList>
    </citation>
    <scope>GENOME REANNOTATION</scope>
    <source>
        <strain>cv. Nipponbare</strain>
    </source>
</reference>
<reference key="4">
    <citation type="journal article" date="2013" name="Rice">
        <title>Improvement of the Oryza sativa Nipponbare reference genome using next generation sequence and optical map data.</title>
        <authorList>
            <person name="Kawahara Y."/>
            <person name="de la Bastide M."/>
            <person name="Hamilton J.P."/>
            <person name="Kanamori H."/>
            <person name="McCombie W.R."/>
            <person name="Ouyang S."/>
            <person name="Schwartz D.C."/>
            <person name="Tanaka T."/>
            <person name="Wu J."/>
            <person name="Zhou S."/>
            <person name="Childs K.L."/>
            <person name="Davidson R.M."/>
            <person name="Lin H."/>
            <person name="Quesada-Ocampo L."/>
            <person name="Vaillancourt B."/>
            <person name="Sakai H."/>
            <person name="Lee S.S."/>
            <person name="Kim J."/>
            <person name="Numa H."/>
            <person name="Itoh T."/>
            <person name="Buell C.R."/>
            <person name="Matsumoto T."/>
        </authorList>
    </citation>
    <scope>GENOME REANNOTATION</scope>
    <source>
        <strain>cv. Nipponbare</strain>
    </source>
</reference>
<reference key="5">
    <citation type="journal article" date="2006" name="Plant Physiol.">
        <title>Genome-wide analysis of basic/helix-loop-helix transcription factor family in rice and Arabidopsis.</title>
        <authorList>
            <person name="Li X."/>
            <person name="Duan X."/>
            <person name="Jiang H."/>
            <person name="Sun Y."/>
            <person name="Tang Y."/>
            <person name="Yuan Z."/>
            <person name="Guo J."/>
            <person name="Liang W."/>
            <person name="Chen L."/>
            <person name="Yin J."/>
            <person name="Ma H."/>
            <person name="Wang J."/>
            <person name="Zhang D."/>
        </authorList>
    </citation>
    <scope>GENE FAMILY</scope>
    <scope>NOMENCLATURE</scope>
</reference>
<reference key="6">
    <citation type="journal article" date="2007" name="Biosci. Biotechnol. Biochem.">
        <title>Characterization of a set of phytochrome-interacting factor-like bHLH proteins in Oryza sativa.</title>
        <authorList>
            <person name="Nakamura Y."/>
            <person name="Kato T."/>
            <person name="Yamashino T."/>
            <person name="Murakami M."/>
            <person name="Mizuno T."/>
        </authorList>
    </citation>
    <scope>FUNCTION</scope>
    <scope>INDUCTION</scope>
</reference>
<reference key="7">
    <citation type="journal article" date="2011" name="New Biotechnol.">
        <title>An atypical HLH protein OsLF in rice regulates flowering time and interacts with OsPIL13 and OsPIL15.</title>
        <authorList>
            <person name="Zhao X.L."/>
            <person name="Shi Z.Y."/>
            <person name="Peng L.T."/>
            <person name="Shen G.Z."/>
            <person name="Zhang J.L."/>
        </authorList>
    </citation>
    <scope>INTERACTION WITH LF AND PRR1</scope>
    <scope>SUBCELLULAR LOCATION</scope>
    <source>
        <strain>cv. Zhonghua 11</strain>
    </source>
</reference>
<organism>
    <name type="scientific">Oryza sativa subsp. japonica</name>
    <name type="common">Rice</name>
    <dbReference type="NCBI Taxonomy" id="39947"/>
    <lineage>
        <taxon>Eukaryota</taxon>
        <taxon>Viridiplantae</taxon>
        <taxon>Streptophyta</taxon>
        <taxon>Embryophyta</taxon>
        <taxon>Tracheophyta</taxon>
        <taxon>Spermatophyta</taxon>
        <taxon>Magnoliopsida</taxon>
        <taxon>Liliopsida</taxon>
        <taxon>Poales</taxon>
        <taxon>Poaceae</taxon>
        <taxon>BOP clade</taxon>
        <taxon>Oryzoideae</taxon>
        <taxon>Oryzeae</taxon>
        <taxon>Oryzinae</taxon>
        <taxon>Oryza</taxon>
        <taxon>Oryza sativa</taxon>
    </lineage>
</organism>
<accession>Q0JNI9</accession>
<accession>A0A0P0V1Q1</accession>
<accession>B7ESW7</accession>
<accession>Q5NAE0</accession>
<feature type="chain" id="PRO_0000444470" description="Transcription factor PHYTOCHROME INTERACTING FACTOR-LIKE 15">
    <location>
        <begin position="1"/>
        <end position="637"/>
    </location>
</feature>
<feature type="domain" description="bHLH" evidence="1">
    <location>
        <begin position="384"/>
        <end position="433"/>
    </location>
</feature>
<feature type="region of interest" description="Disordered" evidence="2">
    <location>
        <begin position="35"/>
        <end position="54"/>
    </location>
</feature>
<feature type="region of interest" description="Disordered" evidence="2">
    <location>
        <begin position="146"/>
        <end position="213"/>
    </location>
</feature>
<feature type="region of interest" description="Disordered" evidence="2">
    <location>
        <begin position="356"/>
        <end position="397"/>
    </location>
</feature>
<feature type="region of interest" description="Basic motif" evidence="1">
    <location>
        <begin position="384"/>
        <end position="397"/>
    </location>
</feature>
<feature type="region of interest" description="Helix-loop-helix motif" evidence="1">
    <location>
        <begin position="398"/>
        <end position="433"/>
    </location>
</feature>
<feature type="region of interest" description="Disordered" evidence="2">
    <location>
        <begin position="601"/>
        <end position="637"/>
    </location>
</feature>
<feature type="compositionally biased region" description="Gly residues" evidence="2">
    <location>
        <begin position="35"/>
        <end position="46"/>
    </location>
</feature>
<feature type="compositionally biased region" description="Polar residues" evidence="2">
    <location>
        <begin position="149"/>
        <end position="170"/>
    </location>
</feature>
<feature type="compositionally biased region" description="Basic and acidic residues" evidence="2">
    <location>
        <begin position="384"/>
        <end position="397"/>
    </location>
</feature>
<feature type="compositionally biased region" description="Polar residues" evidence="2">
    <location>
        <begin position="608"/>
        <end position="621"/>
    </location>
</feature>
<feature type="compositionally biased region" description="Basic and acidic residues" evidence="2">
    <location>
        <begin position="628"/>
        <end position="637"/>
    </location>
</feature>
<keyword id="KW-0238">DNA-binding</keyword>
<keyword id="KW-0539">Nucleus</keyword>
<keyword id="KW-1185">Reference proteome</keyword>
<keyword id="KW-0804">Transcription</keyword>
<keyword id="KW-0805">Transcription regulation</keyword>